<proteinExistence type="evidence at transcript level"/>
<feature type="chain" id="PRO_0000084033" description="4-hydroxyphenylacetate 3-monooxygenase oxygenase component">
    <location>
        <begin position="1"/>
        <end position="520"/>
    </location>
</feature>
<evidence type="ECO:0000250" key="1"/>
<evidence type="ECO:0000305" key="2"/>
<keyword id="KW-0058">Aromatic hydrocarbons catabolism</keyword>
<keyword id="KW-0274">FAD</keyword>
<keyword id="KW-0285">Flavoprotein</keyword>
<keyword id="KW-0503">Monooxygenase</keyword>
<keyword id="KW-0560">Oxidoreductase</keyword>
<gene>
    <name type="primary">hpaB</name>
    <name type="synonym">hpaA</name>
</gene>
<protein>
    <recommendedName>
        <fullName>4-hydroxyphenylacetate 3-monooxygenase oxygenase component</fullName>
        <ecNumber>1.14.14.9</ecNumber>
    </recommendedName>
    <alternativeName>
        <fullName>4-HPA 3-hydroxylase</fullName>
    </alternativeName>
    <alternativeName>
        <fullName>4-HPA 3-monooxygenase large component</fullName>
    </alternativeName>
</protein>
<comment type="function">
    <text evidence="1">Utilizes FADH(2) supplied by HpaC or by another flavin reductase, to catalyze the hydroxylation of 4-hydroxyphenylacetic acid, leading to the production of 3,4-DHPA.</text>
</comment>
<comment type="catalytic activity">
    <reaction>
        <text>4-hydroxyphenylacetate + FADH2 + O2 = 3,4-dihydroxyphenylacetate + FAD + H2O + H(+)</text>
        <dbReference type="Rhea" id="RHEA:30595"/>
        <dbReference type="ChEBI" id="CHEBI:15377"/>
        <dbReference type="ChEBI" id="CHEBI:15378"/>
        <dbReference type="ChEBI" id="CHEBI:15379"/>
        <dbReference type="ChEBI" id="CHEBI:17612"/>
        <dbReference type="ChEBI" id="CHEBI:48999"/>
        <dbReference type="ChEBI" id="CHEBI:57692"/>
        <dbReference type="ChEBI" id="CHEBI:58307"/>
        <dbReference type="EC" id="1.14.14.9"/>
    </reaction>
</comment>
<comment type="pathway">
    <text>Aromatic compound metabolism; 4-hydroxyphenylacetate degradation; pyruvate and succinate semialdehyde from 4-hydroxyphenylacetate: step 1/7.</text>
</comment>
<comment type="subunit">
    <text evidence="1">4-HPA 3-monooxygenase consists of a reductase component HpaC and an oxygenase component HpaB.</text>
</comment>
<comment type="induction">
    <text>By 3- or 4-hydroxyphenylacetic acid.</text>
</comment>
<comment type="similarity">
    <text evidence="2">Belongs to the FADH(2)-utilizing monooxygenase family.</text>
</comment>
<name>HPAB_KLEOX</name>
<organism>
    <name type="scientific">Klebsiella oxytoca</name>
    <dbReference type="NCBI Taxonomy" id="571"/>
    <lineage>
        <taxon>Bacteria</taxon>
        <taxon>Pseudomonadati</taxon>
        <taxon>Pseudomonadota</taxon>
        <taxon>Gammaproteobacteria</taxon>
        <taxon>Enterobacterales</taxon>
        <taxon>Enterobacteriaceae</taxon>
        <taxon>Klebsiella/Raoultella group</taxon>
        <taxon>Klebsiella</taxon>
    </lineage>
</organism>
<reference key="1">
    <citation type="journal article" date="1997" name="Arch. Microbiol.">
        <title>Molecular cloning and analysis of the genes encoding the 4-hydroxyphenylacetate hydroxylase from Klebsiella pneumoniae.</title>
        <authorList>
            <person name="Gibello A."/>
            <person name="Suarez M."/>
            <person name="Allende J.L."/>
            <person name="Martin M."/>
        </authorList>
    </citation>
    <scope>NUCLEOTIDE SEQUENCE [GENOMIC DNA]</scope>
    <source>
        <strain>M5a1</strain>
    </source>
</reference>
<dbReference type="EC" id="1.14.14.9"/>
<dbReference type="EMBL" id="L41068">
    <property type="protein sequence ID" value="AAC37120.1"/>
    <property type="molecule type" value="Genomic_DNA"/>
</dbReference>
<dbReference type="SMR" id="Q48440"/>
<dbReference type="STRING" id="571.AB185_32450"/>
<dbReference type="eggNOG" id="COG2368">
    <property type="taxonomic scope" value="Bacteria"/>
</dbReference>
<dbReference type="UniPathway" id="UPA00208">
    <property type="reaction ID" value="UER00416"/>
</dbReference>
<dbReference type="GO" id="GO:0052881">
    <property type="term" value="F:4-hydroxyphenylacetate 3-monooxygenase activity"/>
    <property type="evidence" value="ECO:0007669"/>
    <property type="project" value="UniProtKB-EC"/>
</dbReference>
<dbReference type="GO" id="GO:0050660">
    <property type="term" value="F:flavin adenine dinucleotide binding"/>
    <property type="evidence" value="ECO:0007669"/>
    <property type="project" value="InterPro"/>
</dbReference>
<dbReference type="GO" id="GO:0016627">
    <property type="term" value="F:oxidoreductase activity, acting on the CH-CH group of donors"/>
    <property type="evidence" value="ECO:0007669"/>
    <property type="project" value="InterPro"/>
</dbReference>
<dbReference type="GO" id="GO:0010124">
    <property type="term" value="P:phenylacetate catabolic process"/>
    <property type="evidence" value="ECO:0007669"/>
    <property type="project" value="InterPro"/>
</dbReference>
<dbReference type="FunFam" id="1.10.3140.10:FF:000001">
    <property type="entry name" value="4-hydroxyphenylacetate 3-monooxygenase oxygenase component"/>
    <property type="match status" value="1"/>
</dbReference>
<dbReference type="FunFam" id="2.40.110.10:FF:000026">
    <property type="entry name" value="4-hydroxyphenylacetate 3-monooxygenase oxygenase component"/>
    <property type="match status" value="1"/>
</dbReference>
<dbReference type="Gene3D" id="1.10.3140.10">
    <property type="entry name" value="4-hydroxybutyryl-coa dehydratase, domain 1"/>
    <property type="match status" value="1"/>
</dbReference>
<dbReference type="Gene3D" id="2.40.110.10">
    <property type="entry name" value="Butyryl-CoA Dehydrogenase, subunit A, domain 2"/>
    <property type="match status" value="1"/>
</dbReference>
<dbReference type="Gene3D" id="1.20.140.10">
    <property type="entry name" value="Butyryl-CoA Dehydrogenase, subunit A, domain 3"/>
    <property type="match status" value="1"/>
</dbReference>
<dbReference type="InterPro" id="IPR046373">
    <property type="entry name" value="Acyl-CoA_Oxase/DH_mid-dom_sf"/>
</dbReference>
<dbReference type="InterPro" id="IPR036250">
    <property type="entry name" value="AcylCo_DH-like_C"/>
</dbReference>
<dbReference type="InterPro" id="IPR009100">
    <property type="entry name" value="AcylCoA_DH/oxidase_NM_dom_sf"/>
</dbReference>
<dbReference type="InterPro" id="IPR024677">
    <property type="entry name" value="HpaB/PvcC"/>
</dbReference>
<dbReference type="InterPro" id="IPR004925">
    <property type="entry name" value="HpaB/PvcC/4-BUDH"/>
</dbReference>
<dbReference type="InterPro" id="IPR024719">
    <property type="entry name" value="HpaB/PvcC/4-BUDH_C"/>
</dbReference>
<dbReference type="InterPro" id="IPR024674">
    <property type="entry name" value="HpaB/PvcC/4-BUDH_N"/>
</dbReference>
<dbReference type="InterPro" id="IPR012688">
    <property type="entry name" value="HpaB_gammaproteobact"/>
</dbReference>
<dbReference type="NCBIfam" id="TIGR02310">
    <property type="entry name" value="HpaB-2"/>
    <property type="match status" value="1"/>
</dbReference>
<dbReference type="PANTHER" id="PTHR36117">
    <property type="entry name" value="4-HYDROXYPHENYLACETATE 3-MONOOXYGENASE-RELATED"/>
    <property type="match status" value="1"/>
</dbReference>
<dbReference type="PANTHER" id="PTHR36117:SF3">
    <property type="entry name" value="4-HYDROXYPHENYLACETATE 3-MONOOXYGENASE-RELATED"/>
    <property type="match status" value="1"/>
</dbReference>
<dbReference type="Pfam" id="PF03241">
    <property type="entry name" value="HpaB"/>
    <property type="match status" value="1"/>
</dbReference>
<dbReference type="Pfam" id="PF11794">
    <property type="entry name" value="HpaB_N"/>
    <property type="match status" value="1"/>
</dbReference>
<dbReference type="PIRSF" id="PIRSF500125">
    <property type="entry name" value="4_HPA_large"/>
    <property type="match status" value="1"/>
</dbReference>
<dbReference type="PIRSF" id="PIRSF000331">
    <property type="entry name" value="HpaA_HpaB"/>
    <property type="match status" value="1"/>
</dbReference>
<dbReference type="SUPFAM" id="SSF47203">
    <property type="entry name" value="Acyl-CoA dehydrogenase C-terminal domain-like"/>
    <property type="match status" value="1"/>
</dbReference>
<dbReference type="SUPFAM" id="SSF56645">
    <property type="entry name" value="Acyl-CoA dehydrogenase NM domain-like"/>
    <property type="match status" value="1"/>
</dbReference>
<sequence>MKPENFRADTKRPLTGEEYLKSLQDGREIYIYGERVKDVTTHPAFRNAAASVAQLYDALHNPELQNTLCWGTDTGSGGYTHKFFRVAKSADDLRQQRDAIAEWSRLSYGWMGRTPDYKAAFGGGLGANPGFYGQFEQNARDWYTRIQETGLYFNHAIVNPPIDRHKPADEVKDVYIKLEKETDAGIIVSGAKVVATNSALTHYNMIGFGSAQVMGENPDFALMFVAPMDAEGDKLISRASYELVAGATGSPYDYPLSSRFDENDAILVMDNVLIPWENVLIYRDFDRCRRWTMEGGFARMYPLQACVRLAVKLDFITALLKRSLECTGTLEFRGVQAELGEVVAWRNMFWALSDSMCAEATPWVNGAYLPDHAALQTYRVMAPMPYAKIKNIIERSVTSGLIYLPSSARDLNNPQINDTLAKYVRGSNGMDHVERIKILKLMWDAIGSEFGGCHELYEINYSGSQDEIRLQCLRQAQSSGNMDKMMAMVDRCLSEYDQNGWTVPHLHNNTDINMLDKLLK</sequence>
<accession>Q48440</accession>